<evidence type="ECO:0000255" key="1">
    <source>
        <dbReference type="HAMAP-Rule" id="MF_00151"/>
    </source>
</evidence>
<accession>C1CTM3</accession>
<gene>
    <name evidence="1" type="primary">coaD</name>
    <name type="ordered locus">SPT_1948</name>
</gene>
<comment type="function">
    <text evidence="1">Reversibly transfers an adenylyl group from ATP to 4'-phosphopantetheine, yielding dephospho-CoA (dPCoA) and pyrophosphate.</text>
</comment>
<comment type="catalytic activity">
    <reaction evidence="1">
        <text>(R)-4'-phosphopantetheine + ATP + H(+) = 3'-dephospho-CoA + diphosphate</text>
        <dbReference type="Rhea" id="RHEA:19801"/>
        <dbReference type="ChEBI" id="CHEBI:15378"/>
        <dbReference type="ChEBI" id="CHEBI:30616"/>
        <dbReference type="ChEBI" id="CHEBI:33019"/>
        <dbReference type="ChEBI" id="CHEBI:57328"/>
        <dbReference type="ChEBI" id="CHEBI:61723"/>
        <dbReference type="EC" id="2.7.7.3"/>
    </reaction>
</comment>
<comment type="cofactor">
    <cofactor evidence="1">
        <name>Mg(2+)</name>
        <dbReference type="ChEBI" id="CHEBI:18420"/>
    </cofactor>
</comment>
<comment type="pathway">
    <text evidence="1">Cofactor biosynthesis; coenzyme A biosynthesis; CoA from (R)-pantothenate: step 4/5.</text>
</comment>
<comment type="subunit">
    <text evidence="1">Homohexamer.</text>
</comment>
<comment type="subcellular location">
    <subcellularLocation>
        <location evidence="1">Cytoplasm</location>
    </subcellularLocation>
</comment>
<comment type="similarity">
    <text evidence="1">Belongs to the bacterial CoaD family.</text>
</comment>
<protein>
    <recommendedName>
        <fullName evidence="1">Phosphopantetheine adenylyltransferase</fullName>
        <ecNumber evidence="1">2.7.7.3</ecNumber>
    </recommendedName>
    <alternativeName>
        <fullName evidence="1">Dephospho-CoA pyrophosphorylase</fullName>
    </alternativeName>
    <alternativeName>
        <fullName evidence="1">Pantetheine-phosphate adenylyltransferase</fullName>
        <shortName evidence="1">PPAT</shortName>
    </alternativeName>
</protein>
<organism>
    <name type="scientific">Streptococcus pneumoniae (strain Taiwan19F-14)</name>
    <dbReference type="NCBI Taxonomy" id="487213"/>
    <lineage>
        <taxon>Bacteria</taxon>
        <taxon>Bacillati</taxon>
        <taxon>Bacillota</taxon>
        <taxon>Bacilli</taxon>
        <taxon>Lactobacillales</taxon>
        <taxon>Streptococcaceae</taxon>
        <taxon>Streptococcus</taxon>
    </lineage>
</organism>
<keyword id="KW-0067">ATP-binding</keyword>
<keyword id="KW-0173">Coenzyme A biosynthesis</keyword>
<keyword id="KW-0963">Cytoplasm</keyword>
<keyword id="KW-0460">Magnesium</keyword>
<keyword id="KW-0547">Nucleotide-binding</keyword>
<keyword id="KW-0548">Nucleotidyltransferase</keyword>
<keyword id="KW-0808">Transferase</keyword>
<dbReference type="EC" id="2.7.7.3" evidence="1"/>
<dbReference type="EMBL" id="CP000921">
    <property type="protein sequence ID" value="ACO22443.1"/>
    <property type="molecule type" value="Genomic_DNA"/>
</dbReference>
<dbReference type="RefSeq" id="WP_001280731.1">
    <property type="nucleotide sequence ID" value="NC_012469.1"/>
</dbReference>
<dbReference type="SMR" id="C1CTM3"/>
<dbReference type="KEGG" id="snt:SPT_1948"/>
<dbReference type="HOGENOM" id="CLU_100149_0_1_9"/>
<dbReference type="UniPathway" id="UPA00241">
    <property type="reaction ID" value="UER00355"/>
</dbReference>
<dbReference type="GO" id="GO:0005737">
    <property type="term" value="C:cytoplasm"/>
    <property type="evidence" value="ECO:0007669"/>
    <property type="project" value="UniProtKB-SubCell"/>
</dbReference>
<dbReference type="GO" id="GO:0005524">
    <property type="term" value="F:ATP binding"/>
    <property type="evidence" value="ECO:0007669"/>
    <property type="project" value="UniProtKB-KW"/>
</dbReference>
<dbReference type="GO" id="GO:0004595">
    <property type="term" value="F:pantetheine-phosphate adenylyltransferase activity"/>
    <property type="evidence" value="ECO:0007669"/>
    <property type="project" value="UniProtKB-UniRule"/>
</dbReference>
<dbReference type="GO" id="GO:0015937">
    <property type="term" value="P:coenzyme A biosynthetic process"/>
    <property type="evidence" value="ECO:0007669"/>
    <property type="project" value="UniProtKB-UniRule"/>
</dbReference>
<dbReference type="CDD" id="cd02163">
    <property type="entry name" value="PPAT"/>
    <property type="match status" value="1"/>
</dbReference>
<dbReference type="Gene3D" id="3.40.50.620">
    <property type="entry name" value="HUPs"/>
    <property type="match status" value="1"/>
</dbReference>
<dbReference type="HAMAP" id="MF_00151">
    <property type="entry name" value="PPAT_bact"/>
    <property type="match status" value="1"/>
</dbReference>
<dbReference type="InterPro" id="IPR004821">
    <property type="entry name" value="Cyt_trans-like"/>
</dbReference>
<dbReference type="InterPro" id="IPR001980">
    <property type="entry name" value="PPAT"/>
</dbReference>
<dbReference type="InterPro" id="IPR014729">
    <property type="entry name" value="Rossmann-like_a/b/a_fold"/>
</dbReference>
<dbReference type="NCBIfam" id="TIGR01510">
    <property type="entry name" value="coaD_prev_kdtB"/>
    <property type="match status" value="1"/>
</dbReference>
<dbReference type="NCBIfam" id="TIGR00125">
    <property type="entry name" value="cyt_tran_rel"/>
    <property type="match status" value="1"/>
</dbReference>
<dbReference type="PANTHER" id="PTHR21342">
    <property type="entry name" value="PHOSPHOPANTETHEINE ADENYLYLTRANSFERASE"/>
    <property type="match status" value="1"/>
</dbReference>
<dbReference type="PANTHER" id="PTHR21342:SF1">
    <property type="entry name" value="PHOSPHOPANTETHEINE ADENYLYLTRANSFERASE"/>
    <property type="match status" value="1"/>
</dbReference>
<dbReference type="Pfam" id="PF01467">
    <property type="entry name" value="CTP_transf_like"/>
    <property type="match status" value="1"/>
</dbReference>
<dbReference type="PRINTS" id="PR01020">
    <property type="entry name" value="LPSBIOSNTHSS"/>
</dbReference>
<dbReference type="SUPFAM" id="SSF52374">
    <property type="entry name" value="Nucleotidylyl transferase"/>
    <property type="match status" value="1"/>
</dbReference>
<proteinExistence type="inferred from homology"/>
<sequence length="162" mass="18515">MSDKIGLFTGSFDPMTNGHLDIIERASRLFDKLYVGIFFNPHKQGFLPIENRKRGLEKALGHLENVEVVASHDELVVDVAKRLGATFLVRGLRNASDLQYEASFDYYNHQLSSDIETIYLHSRPEHLYISSSGVRELLKFGQDIACYVPESILEEIRNEKKD</sequence>
<feature type="chain" id="PRO_1000123307" description="Phosphopantetheine adenylyltransferase">
    <location>
        <begin position="1"/>
        <end position="162"/>
    </location>
</feature>
<feature type="binding site" evidence="1">
    <location>
        <begin position="11"/>
        <end position="12"/>
    </location>
    <ligand>
        <name>ATP</name>
        <dbReference type="ChEBI" id="CHEBI:30616"/>
    </ligand>
</feature>
<feature type="binding site" evidence="1">
    <location>
        <position position="11"/>
    </location>
    <ligand>
        <name>substrate</name>
    </ligand>
</feature>
<feature type="binding site" evidence="1">
    <location>
        <position position="19"/>
    </location>
    <ligand>
        <name>ATP</name>
        <dbReference type="ChEBI" id="CHEBI:30616"/>
    </ligand>
</feature>
<feature type="binding site" evidence="1">
    <location>
        <position position="43"/>
    </location>
    <ligand>
        <name>substrate</name>
    </ligand>
</feature>
<feature type="binding site" evidence="1">
    <location>
        <position position="76"/>
    </location>
    <ligand>
        <name>substrate</name>
    </ligand>
</feature>
<feature type="binding site" evidence="1">
    <location>
        <position position="90"/>
    </location>
    <ligand>
        <name>substrate</name>
    </ligand>
</feature>
<feature type="binding site" evidence="1">
    <location>
        <begin position="91"/>
        <end position="93"/>
    </location>
    <ligand>
        <name>ATP</name>
        <dbReference type="ChEBI" id="CHEBI:30616"/>
    </ligand>
</feature>
<feature type="binding site" evidence="1">
    <location>
        <position position="101"/>
    </location>
    <ligand>
        <name>ATP</name>
        <dbReference type="ChEBI" id="CHEBI:30616"/>
    </ligand>
</feature>
<feature type="binding site" evidence="1">
    <location>
        <begin position="126"/>
        <end position="132"/>
    </location>
    <ligand>
        <name>ATP</name>
        <dbReference type="ChEBI" id="CHEBI:30616"/>
    </ligand>
</feature>
<feature type="site" description="Transition state stabilizer" evidence="1">
    <location>
        <position position="19"/>
    </location>
</feature>
<reference key="1">
    <citation type="journal article" date="2010" name="Genome Biol.">
        <title>Structure and dynamics of the pan-genome of Streptococcus pneumoniae and closely related species.</title>
        <authorList>
            <person name="Donati C."/>
            <person name="Hiller N.L."/>
            <person name="Tettelin H."/>
            <person name="Muzzi A."/>
            <person name="Croucher N.J."/>
            <person name="Angiuoli S.V."/>
            <person name="Oggioni M."/>
            <person name="Dunning Hotopp J.C."/>
            <person name="Hu F.Z."/>
            <person name="Riley D.R."/>
            <person name="Covacci A."/>
            <person name="Mitchell T.J."/>
            <person name="Bentley S.D."/>
            <person name="Kilian M."/>
            <person name="Ehrlich G.D."/>
            <person name="Rappuoli R."/>
            <person name="Moxon E.R."/>
            <person name="Masignani V."/>
        </authorList>
    </citation>
    <scope>NUCLEOTIDE SEQUENCE [LARGE SCALE GENOMIC DNA]</scope>
    <source>
        <strain>Taiwan19F-14</strain>
    </source>
</reference>
<name>COAD_STRZT</name>